<accession>Q038L2</accession>
<organism>
    <name type="scientific">Lacticaseibacillus paracasei (strain ATCC 334 / BCRC 17002 / CCUG 31169 / CIP 107868 / KCTC 3260 / NRRL B-441)</name>
    <name type="common">Lactobacillus paracasei</name>
    <dbReference type="NCBI Taxonomy" id="321967"/>
    <lineage>
        <taxon>Bacteria</taxon>
        <taxon>Bacillati</taxon>
        <taxon>Bacillota</taxon>
        <taxon>Bacilli</taxon>
        <taxon>Lactobacillales</taxon>
        <taxon>Lactobacillaceae</taxon>
        <taxon>Lacticaseibacillus</taxon>
    </lineage>
</organism>
<name>RS2_LACP3</name>
<gene>
    <name evidence="1" type="primary">rpsB</name>
    <name type="ordered locus">LSEI_1586</name>
</gene>
<protein>
    <recommendedName>
        <fullName evidence="1">Small ribosomal subunit protein uS2</fullName>
    </recommendedName>
    <alternativeName>
        <fullName evidence="3">30S ribosomal protein S2</fullName>
    </alternativeName>
</protein>
<sequence length="262" mass="29547">MAVLSMKQLLEAGVHFGHQTRRWNPKMKPYIFTERNGIYIIDLQKTVKMIDDAYNFVKEEAQNGGVFLFVGTKKQAQDAIAEEATRAGQYYVNHRWLGGTLTNWNTIQTRIKRLKDIKKMATDGTFDVLPKKEVSLLKKQQDKLEKFLGGIEDMPRIPDVLFIVDPRKEKIAVQEAQKLNIPIVAMVDTNTDPDDIDVIIPSNDDAIRAVRLITSKMADAIIEGNQGEDQDDAQEQQVAADKKADSMEDIVEAVEGDNKSAK</sequence>
<comment type="similarity">
    <text evidence="1">Belongs to the universal ribosomal protein uS2 family.</text>
</comment>
<feature type="chain" id="PRO_1000003982" description="Small ribosomal subunit protein uS2">
    <location>
        <begin position="1"/>
        <end position="262"/>
    </location>
</feature>
<feature type="region of interest" description="Disordered" evidence="2">
    <location>
        <begin position="224"/>
        <end position="246"/>
    </location>
</feature>
<evidence type="ECO:0000255" key="1">
    <source>
        <dbReference type="HAMAP-Rule" id="MF_00291"/>
    </source>
</evidence>
<evidence type="ECO:0000256" key="2">
    <source>
        <dbReference type="SAM" id="MobiDB-lite"/>
    </source>
</evidence>
<evidence type="ECO:0000305" key="3"/>
<proteinExistence type="inferred from homology"/>
<reference key="1">
    <citation type="journal article" date="2006" name="Proc. Natl. Acad. Sci. U.S.A.">
        <title>Comparative genomics of the lactic acid bacteria.</title>
        <authorList>
            <person name="Makarova K.S."/>
            <person name="Slesarev A."/>
            <person name="Wolf Y.I."/>
            <person name="Sorokin A."/>
            <person name="Mirkin B."/>
            <person name="Koonin E.V."/>
            <person name="Pavlov A."/>
            <person name="Pavlova N."/>
            <person name="Karamychev V."/>
            <person name="Polouchine N."/>
            <person name="Shakhova V."/>
            <person name="Grigoriev I."/>
            <person name="Lou Y."/>
            <person name="Rohksar D."/>
            <person name="Lucas S."/>
            <person name="Huang K."/>
            <person name="Goodstein D.M."/>
            <person name="Hawkins T."/>
            <person name="Plengvidhya V."/>
            <person name="Welker D."/>
            <person name="Hughes J."/>
            <person name="Goh Y."/>
            <person name="Benson A."/>
            <person name="Baldwin K."/>
            <person name="Lee J.-H."/>
            <person name="Diaz-Muniz I."/>
            <person name="Dosti B."/>
            <person name="Smeianov V."/>
            <person name="Wechter W."/>
            <person name="Barabote R."/>
            <person name="Lorca G."/>
            <person name="Altermann E."/>
            <person name="Barrangou R."/>
            <person name="Ganesan B."/>
            <person name="Xie Y."/>
            <person name="Rawsthorne H."/>
            <person name="Tamir D."/>
            <person name="Parker C."/>
            <person name="Breidt F."/>
            <person name="Broadbent J.R."/>
            <person name="Hutkins R."/>
            <person name="O'Sullivan D."/>
            <person name="Steele J."/>
            <person name="Unlu G."/>
            <person name="Saier M.H. Jr."/>
            <person name="Klaenhammer T."/>
            <person name="Richardson P."/>
            <person name="Kozyavkin S."/>
            <person name="Weimer B.C."/>
            <person name="Mills D.A."/>
        </authorList>
    </citation>
    <scope>NUCLEOTIDE SEQUENCE [LARGE SCALE GENOMIC DNA]</scope>
    <source>
        <strain>ATCC 334 / BCRC 17002 / CCUG 31169 / CIP 107868 / KCTC 3260 / NRRL B-441</strain>
    </source>
</reference>
<keyword id="KW-1185">Reference proteome</keyword>
<keyword id="KW-0687">Ribonucleoprotein</keyword>
<keyword id="KW-0689">Ribosomal protein</keyword>
<dbReference type="EMBL" id="CP000423">
    <property type="protein sequence ID" value="ABJ70360.1"/>
    <property type="molecule type" value="Genomic_DNA"/>
</dbReference>
<dbReference type="RefSeq" id="WP_003565810.1">
    <property type="nucleotide sequence ID" value="NC_008526.1"/>
</dbReference>
<dbReference type="RefSeq" id="YP_806802.1">
    <property type="nucleotide sequence ID" value="NC_008526.1"/>
</dbReference>
<dbReference type="SMR" id="Q038L2"/>
<dbReference type="STRING" id="321967.LSEI_1586"/>
<dbReference type="PaxDb" id="321967-LSEI_1586"/>
<dbReference type="GeneID" id="57090240"/>
<dbReference type="KEGG" id="lca:LSEI_1586"/>
<dbReference type="PATRIC" id="fig|321967.11.peg.1566"/>
<dbReference type="HOGENOM" id="CLU_040318_1_2_9"/>
<dbReference type="Proteomes" id="UP000001651">
    <property type="component" value="Chromosome"/>
</dbReference>
<dbReference type="GO" id="GO:0022627">
    <property type="term" value="C:cytosolic small ribosomal subunit"/>
    <property type="evidence" value="ECO:0007669"/>
    <property type="project" value="TreeGrafter"/>
</dbReference>
<dbReference type="GO" id="GO:0003735">
    <property type="term" value="F:structural constituent of ribosome"/>
    <property type="evidence" value="ECO:0007669"/>
    <property type="project" value="InterPro"/>
</dbReference>
<dbReference type="GO" id="GO:0006412">
    <property type="term" value="P:translation"/>
    <property type="evidence" value="ECO:0007669"/>
    <property type="project" value="UniProtKB-UniRule"/>
</dbReference>
<dbReference type="CDD" id="cd01425">
    <property type="entry name" value="RPS2"/>
    <property type="match status" value="1"/>
</dbReference>
<dbReference type="FunFam" id="1.10.287.610:FF:000001">
    <property type="entry name" value="30S ribosomal protein S2"/>
    <property type="match status" value="1"/>
</dbReference>
<dbReference type="Gene3D" id="3.40.50.10490">
    <property type="entry name" value="Glucose-6-phosphate isomerase like protein, domain 1"/>
    <property type="match status" value="1"/>
</dbReference>
<dbReference type="Gene3D" id="1.10.287.610">
    <property type="entry name" value="Helix hairpin bin"/>
    <property type="match status" value="1"/>
</dbReference>
<dbReference type="HAMAP" id="MF_00291_B">
    <property type="entry name" value="Ribosomal_uS2_B"/>
    <property type="match status" value="1"/>
</dbReference>
<dbReference type="InterPro" id="IPR001865">
    <property type="entry name" value="Ribosomal_uS2"/>
</dbReference>
<dbReference type="InterPro" id="IPR005706">
    <property type="entry name" value="Ribosomal_uS2_bac/mit/plastid"/>
</dbReference>
<dbReference type="InterPro" id="IPR018130">
    <property type="entry name" value="Ribosomal_uS2_CS"/>
</dbReference>
<dbReference type="InterPro" id="IPR023591">
    <property type="entry name" value="Ribosomal_uS2_flav_dom_sf"/>
</dbReference>
<dbReference type="NCBIfam" id="TIGR01011">
    <property type="entry name" value="rpsB_bact"/>
    <property type="match status" value="1"/>
</dbReference>
<dbReference type="PANTHER" id="PTHR12534">
    <property type="entry name" value="30S RIBOSOMAL PROTEIN S2 PROKARYOTIC AND ORGANELLAR"/>
    <property type="match status" value="1"/>
</dbReference>
<dbReference type="PANTHER" id="PTHR12534:SF0">
    <property type="entry name" value="SMALL RIBOSOMAL SUBUNIT PROTEIN US2M"/>
    <property type="match status" value="1"/>
</dbReference>
<dbReference type="Pfam" id="PF00318">
    <property type="entry name" value="Ribosomal_S2"/>
    <property type="match status" value="1"/>
</dbReference>
<dbReference type="PRINTS" id="PR00395">
    <property type="entry name" value="RIBOSOMALS2"/>
</dbReference>
<dbReference type="SUPFAM" id="SSF52313">
    <property type="entry name" value="Ribosomal protein S2"/>
    <property type="match status" value="1"/>
</dbReference>
<dbReference type="PROSITE" id="PS00962">
    <property type="entry name" value="RIBOSOMAL_S2_1"/>
    <property type="match status" value="1"/>
</dbReference>
<dbReference type="PROSITE" id="PS00963">
    <property type="entry name" value="RIBOSOMAL_S2_2"/>
    <property type="match status" value="1"/>
</dbReference>